<reference key="1">
    <citation type="journal article" date="2009" name="Genome Res.">
        <title>Comparative genomics of protoploid Saccharomycetaceae.</title>
        <authorList>
            <consortium name="The Genolevures Consortium"/>
            <person name="Souciet J.-L."/>
            <person name="Dujon B."/>
            <person name="Gaillardin C."/>
            <person name="Johnston M."/>
            <person name="Baret P.V."/>
            <person name="Cliften P."/>
            <person name="Sherman D.J."/>
            <person name="Weissenbach J."/>
            <person name="Westhof E."/>
            <person name="Wincker P."/>
            <person name="Jubin C."/>
            <person name="Poulain J."/>
            <person name="Barbe V."/>
            <person name="Segurens B."/>
            <person name="Artiguenave F."/>
            <person name="Anthouard V."/>
            <person name="Vacherie B."/>
            <person name="Val M.-E."/>
            <person name="Fulton R.S."/>
            <person name="Minx P."/>
            <person name="Wilson R."/>
            <person name="Durrens P."/>
            <person name="Jean G."/>
            <person name="Marck C."/>
            <person name="Martin T."/>
            <person name="Nikolski M."/>
            <person name="Rolland T."/>
            <person name="Seret M.-L."/>
            <person name="Casaregola S."/>
            <person name="Despons L."/>
            <person name="Fairhead C."/>
            <person name="Fischer G."/>
            <person name="Lafontaine I."/>
            <person name="Leh V."/>
            <person name="Lemaire M."/>
            <person name="de Montigny J."/>
            <person name="Neuveglise C."/>
            <person name="Thierry A."/>
            <person name="Blanc-Lenfle I."/>
            <person name="Bleykasten C."/>
            <person name="Diffels J."/>
            <person name="Fritsch E."/>
            <person name="Frangeul L."/>
            <person name="Goeffon A."/>
            <person name="Jauniaux N."/>
            <person name="Kachouri-Lafond R."/>
            <person name="Payen C."/>
            <person name="Potier S."/>
            <person name="Pribylova L."/>
            <person name="Ozanne C."/>
            <person name="Richard G.-F."/>
            <person name="Sacerdot C."/>
            <person name="Straub M.-L."/>
            <person name="Talla E."/>
        </authorList>
    </citation>
    <scope>NUCLEOTIDE SEQUENCE [LARGE SCALE GENOMIC DNA]</scope>
    <source>
        <strain>ATCC 56472 / CBS 6340 / NRRL Y-8284</strain>
    </source>
</reference>
<sequence length="268" mass="29689">MSFEINWQDLGEDEAVNDSIKSFLNSHLQSISLPSYVSSLQVTDFCLGGIPPNITLREISDPLDEFYNHIEKEELPKDKIPEESDSGCQSADGENGDLLPEVQAESDLQFLVEVDYKGDMRIGVSAELALNYPSPSFMTLPVKLSITDLGIHALCLVAYISKQLFVSFLCDVADPILDARESLIDLGSSAILGKKSLERISLIRSIKIDSEIGEQNNVEGSVLRSVGKLEQFLLEVFRTILKKEAAWPSWINLDFNEDPSGNESSDED</sequence>
<evidence type="ECO:0000255" key="1">
    <source>
        <dbReference type="HAMAP-Rule" id="MF_03104"/>
    </source>
</evidence>
<evidence type="ECO:0000256" key="2">
    <source>
        <dbReference type="SAM" id="MobiDB-lite"/>
    </source>
</evidence>
<name>MDM12_LACTC</name>
<gene>
    <name evidence="1" type="primary">MDM12</name>
    <name type="ordered locus">KLTH0C10780g</name>
</gene>
<protein>
    <recommendedName>
        <fullName evidence="1">Mitochondrial distribution and morphology protein 12</fullName>
    </recommendedName>
    <alternativeName>
        <fullName evidence="1">Mitochondrial inheritance component MDM12</fullName>
    </alternativeName>
</protein>
<feature type="chain" id="PRO_0000384290" description="Mitochondrial distribution and morphology protein 12">
    <location>
        <begin position="1"/>
        <end position="268"/>
    </location>
</feature>
<feature type="domain" description="SMP-LTD" evidence="1">
    <location>
        <begin position="1"/>
        <end position="256"/>
    </location>
</feature>
<feature type="region of interest" description="Disordered" evidence="2">
    <location>
        <begin position="75"/>
        <end position="94"/>
    </location>
</feature>
<organism>
    <name type="scientific">Lachancea thermotolerans (strain ATCC 56472 / CBS 6340 / NRRL Y-8284)</name>
    <name type="common">Yeast</name>
    <name type="synonym">Kluyveromyces thermotolerans</name>
    <dbReference type="NCBI Taxonomy" id="559295"/>
    <lineage>
        <taxon>Eukaryota</taxon>
        <taxon>Fungi</taxon>
        <taxon>Dikarya</taxon>
        <taxon>Ascomycota</taxon>
        <taxon>Saccharomycotina</taxon>
        <taxon>Saccharomycetes</taxon>
        <taxon>Saccharomycetales</taxon>
        <taxon>Saccharomycetaceae</taxon>
        <taxon>Lachancea</taxon>
    </lineage>
</organism>
<proteinExistence type="inferred from homology"/>
<comment type="function">
    <text evidence="1">Component of the ERMES/MDM complex, which serves as a molecular tether to connect the endoplasmic reticulum (ER) and mitochondria. Components of this complex are involved in the control of mitochondrial shape and protein biogenesis, and function in nonvesicular lipid trafficking between the ER and mitochondria. MDM12 is required for the interaction of the ER-resident membrane protein MMM1 and the outer mitochondrial membrane-resident beta-barrel protein MDM10. The MDM12-MMM1 subcomplex functions in the major beta-barrel assembly pathway that is responsible for biogenesis of all mitochondrial outer membrane beta-barrel proteins, and acts in a late step after the SAM complex. The MDM10-MDM12-MMM1 subcomplex further acts in the TOM40-specific pathway after the action of the MDM12-MMM1 complex. Essential for establishing and maintaining the structure of mitochondria and maintenance of mtDNA nucleoids.</text>
</comment>
<comment type="subunit">
    <text evidence="1">Component of the ER-mitochondria encounter structure (ERMES) or MDM complex, composed of MMM1, MDM10, MDM12 and MDM34. A MMM1 homodimer associates with one molecule of MDM12 on each side in a pairwise head-to-tail manner, and the SMP-LTD domains of MMM1 and MDM12 generate a continuous hydrophobic tunnel for phospholipid trafficking.</text>
</comment>
<comment type="subcellular location">
    <subcellularLocation>
        <location evidence="1">Mitochondrion outer membrane</location>
        <topology evidence="1">Peripheral membrane protein</topology>
        <orientation evidence="1">Cytoplasmic side</orientation>
    </subcellularLocation>
    <subcellularLocation>
        <location evidence="1">Endoplasmic reticulum membrane</location>
        <topology evidence="1">Peripheral membrane protein</topology>
        <orientation evidence="1">Cytoplasmic side</orientation>
    </subcellularLocation>
    <text evidence="1">The ERMES/MDM complex localizes to a few discrete foci (around 10 per single cell), that represent mitochondria-endoplasmic reticulum junctions. These foci are often found next to mtDNA nucleoids.</text>
</comment>
<comment type="domain">
    <text evidence="1">The SMP-LTD domain is a barrel-like domain that can bind various types of glycerophospholipids in its interior and mediate their transfer between two adjacent bilayers.</text>
</comment>
<comment type="similarity">
    <text evidence="1">Belongs to the MDM12 family.</text>
</comment>
<dbReference type="EMBL" id="CU928167">
    <property type="protein sequence ID" value="CAR22249.1"/>
    <property type="molecule type" value="Genomic_DNA"/>
</dbReference>
<dbReference type="RefSeq" id="XP_002552687.1">
    <property type="nucleotide sequence ID" value="XM_002552641.1"/>
</dbReference>
<dbReference type="SMR" id="C5DEN8"/>
<dbReference type="FunCoup" id="C5DEN8">
    <property type="interactions" value="74"/>
</dbReference>
<dbReference type="STRING" id="559295.C5DEN8"/>
<dbReference type="GeneID" id="8291569"/>
<dbReference type="KEGG" id="lth:KLTH0C10780g"/>
<dbReference type="eggNOG" id="ENOG502QQS2">
    <property type="taxonomic scope" value="Eukaryota"/>
</dbReference>
<dbReference type="HOGENOM" id="CLU_026794_2_0_1"/>
<dbReference type="InParanoid" id="C5DEN8"/>
<dbReference type="OMA" id="AAWPSWI"/>
<dbReference type="OrthoDB" id="3356905at2759"/>
<dbReference type="Proteomes" id="UP000002036">
    <property type="component" value="Chromosome C"/>
</dbReference>
<dbReference type="GO" id="GO:0005789">
    <property type="term" value="C:endoplasmic reticulum membrane"/>
    <property type="evidence" value="ECO:0007669"/>
    <property type="project" value="UniProtKB-SubCell"/>
</dbReference>
<dbReference type="GO" id="GO:0032865">
    <property type="term" value="C:ERMES complex"/>
    <property type="evidence" value="ECO:0007669"/>
    <property type="project" value="UniProtKB-UniRule"/>
</dbReference>
<dbReference type="GO" id="GO:0008289">
    <property type="term" value="F:lipid binding"/>
    <property type="evidence" value="ECO:0007669"/>
    <property type="project" value="UniProtKB-KW"/>
</dbReference>
<dbReference type="GO" id="GO:0000002">
    <property type="term" value="P:mitochondrial genome maintenance"/>
    <property type="evidence" value="ECO:0007669"/>
    <property type="project" value="UniProtKB-UniRule"/>
</dbReference>
<dbReference type="GO" id="GO:1990456">
    <property type="term" value="P:mitochondrion-endoplasmic reticulum membrane tethering"/>
    <property type="evidence" value="ECO:0007669"/>
    <property type="project" value="TreeGrafter"/>
</dbReference>
<dbReference type="GO" id="GO:0015914">
    <property type="term" value="P:phospholipid transport"/>
    <property type="evidence" value="ECO:0007669"/>
    <property type="project" value="TreeGrafter"/>
</dbReference>
<dbReference type="GO" id="GO:0045040">
    <property type="term" value="P:protein insertion into mitochondrial outer membrane"/>
    <property type="evidence" value="ECO:0007669"/>
    <property type="project" value="UniProtKB-UniRule"/>
</dbReference>
<dbReference type="CDD" id="cd21672">
    <property type="entry name" value="SMP_Mdm12"/>
    <property type="match status" value="1"/>
</dbReference>
<dbReference type="HAMAP" id="MF_03104">
    <property type="entry name" value="Mdm12"/>
    <property type="match status" value="1"/>
</dbReference>
<dbReference type="InterPro" id="IPR027532">
    <property type="entry name" value="Mdm12"/>
</dbReference>
<dbReference type="InterPro" id="IPR019411">
    <property type="entry name" value="MMM1_dom"/>
</dbReference>
<dbReference type="InterPro" id="IPR031468">
    <property type="entry name" value="SMP_LBD"/>
</dbReference>
<dbReference type="PANTHER" id="PTHR28204">
    <property type="entry name" value="MITOCHONDRIAL DISTRIBUTION AND MORPHOLOGY PROTEIN 12"/>
    <property type="match status" value="1"/>
</dbReference>
<dbReference type="PANTHER" id="PTHR28204:SF1">
    <property type="entry name" value="MITOCHONDRIAL DISTRIBUTION AND MORPHOLOGY PROTEIN 12"/>
    <property type="match status" value="1"/>
</dbReference>
<dbReference type="Pfam" id="PF10296">
    <property type="entry name" value="MMM1"/>
    <property type="match status" value="1"/>
</dbReference>
<dbReference type="PROSITE" id="PS51847">
    <property type="entry name" value="SMP"/>
    <property type="match status" value="1"/>
</dbReference>
<accession>C5DEN8</accession>
<keyword id="KW-0256">Endoplasmic reticulum</keyword>
<keyword id="KW-0445">Lipid transport</keyword>
<keyword id="KW-0446">Lipid-binding</keyword>
<keyword id="KW-0472">Membrane</keyword>
<keyword id="KW-0496">Mitochondrion</keyword>
<keyword id="KW-1000">Mitochondrion outer membrane</keyword>
<keyword id="KW-1185">Reference proteome</keyword>
<keyword id="KW-0813">Transport</keyword>